<gene>
    <name evidence="1" type="primary">pyrR</name>
    <name type="ordered locus">PSPPH_0474</name>
</gene>
<organism>
    <name type="scientific">Pseudomonas savastanoi pv. phaseolicola (strain 1448A / Race 6)</name>
    <name type="common">Pseudomonas syringae pv. phaseolicola (strain 1448A / Race 6)</name>
    <dbReference type="NCBI Taxonomy" id="264730"/>
    <lineage>
        <taxon>Bacteria</taxon>
        <taxon>Pseudomonadati</taxon>
        <taxon>Pseudomonadota</taxon>
        <taxon>Gammaproteobacteria</taxon>
        <taxon>Pseudomonadales</taxon>
        <taxon>Pseudomonadaceae</taxon>
        <taxon>Pseudomonas</taxon>
    </lineage>
</organism>
<dbReference type="EC" id="2.4.2.9" evidence="1"/>
<dbReference type="EMBL" id="CP000058">
    <property type="protein sequence ID" value="AAZ36277.1"/>
    <property type="molecule type" value="Genomic_DNA"/>
</dbReference>
<dbReference type="RefSeq" id="WP_002551733.1">
    <property type="nucleotide sequence ID" value="NC_005773.3"/>
</dbReference>
<dbReference type="SMR" id="Q48P92"/>
<dbReference type="GeneID" id="61867819"/>
<dbReference type="KEGG" id="psp:PSPPH_0474"/>
<dbReference type="eggNOG" id="COG2065">
    <property type="taxonomic scope" value="Bacteria"/>
</dbReference>
<dbReference type="HOGENOM" id="CLU_094234_1_1_6"/>
<dbReference type="Proteomes" id="UP000000551">
    <property type="component" value="Chromosome"/>
</dbReference>
<dbReference type="GO" id="GO:0004845">
    <property type="term" value="F:uracil phosphoribosyltransferase activity"/>
    <property type="evidence" value="ECO:0007669"/>
    <property type="project" value="UniProtKB-UniRule"/>
</dbReference>
<dbReference type="GO" id="GO:0006355">
    <property type="term" value="P:regulation of DNA-templated transcription"/>
    <property type="evidence" value="ECO:0007669"/>
    <property type="project" value="UniProtKB-UniRule"/>
</dbReference>
<dbReference type="CDD" id="cd06223">
    <property type="entry name" value="PRTases_typeI"/>
    <property type="match status" value="1"/>
</dbReference>
<dbReference type="Gene3D" id="3.40.50.2020">
    <property type="match status" value="1"/>
</dbReference>
<dbReference type="HAMAP" id="MF_01219">
    <property type="entry name" value="PyrR"/>
    <property type="match status" value="1"/>
</dbReference>
<dbReference type="InterPro" id="IPR000836">
    <property type="entry name" value="PRibTrfase_dom"/>
</dbReference>
<dbReference type="InterPro" id="IPR029057">
    <property type="entry name" value="PRTase-like"/>
</dbReference>
<dbReference type="InterPro" id="IPR023050">
    <property type="entry name" value="PyrR"/>
</dbReference>
<dbReference type="InterPro" id="IPR050137">
    <property type="entry name" value="PyrR_bifunctional"/>
</dbReference>
<dbReference type="NCBIfam" id="NF003545">
    <property type="entry name" value="PRK05205.1-1"/>
    <property type="match status" value="1"/>
</dbReference>
<dbReference type="PANTHER" id="PTHR11608">
    <property type="entry name" value="BIFUNCTIONAL PROTEIN PYRR"/>
    <property type="match status" value="1"/>
</dbReference>
<dbReference type="PANTHER" id="PTHR11608:SF0">
    <property type="entry name" value="BIFUNCTIONAL PROTEIN PYRR"/>
    <property type="match status" value="1"/>
</dbReference>
<dbReference type="Pfam" id="PF00156">
    <property type="entry name" value="Pribosyltran"/>
    <property type="match status" value="1"/>
</dbReference>
<dbReference type="SUPFAM" id="SSF53271">
    <property type="entry name" value="PRTase-like"/>
    <property type="match status" value="1"/>
</dbReference>
<accession>Q48P92</accession>
<comment type="function">
    <text evidence="1">Regulates the transcription of the pyrimidine nucleotide (pyr) operon in response to exogenous pyrimidines.</text>
</comment>
<comment type="function">
    <text evidence="1">Also displays a weak uracil phosphoribosyltransferase activity which is not physiologically significant.</text>
</comment>
<comment type="catalytic activity">
    <reaction evidence="1">
        <text>UMP + diphosphate = 5-phospho-alpha-D-ribose 1-diphosphate + uracil</text>
        <dbReference type="Rhea" id="RHEA:13017"/>
        <dbReference type="ChEBI" id="CHEBI:17568"/>
        <dbReference type="ChEBI" id="CHEBI:33019"/>
        <dbReference type="ChEBI" id="CHEBI:57865"/>
        <dbReference type="ChEBI" id="CHEBI:58017"/>
        <dbReference type="EC" id="2.4.2.9"/>
    </reaction>
</comment>
<comment type="similarity">
    <text evidence="1">Belongs to the purine/pyrimidine phosphoribosyltransferase family. PyrR subfamily.</text>
</comment>
<reference key="1">
    <citation type="journal article" date="2005" name="J. Bacteriol.">
        <title>Whole-genome sequence analysis of Pseudomonas syringae pv. phaseolicola 1448A reveals divergence among pathovars in genes involved in virulence and transposition.</title>
        <authorList>
            <person name="Joardar V."/>
            <person name="Lindeberg M."/>
            <person name="Jackson R.W."/>
            <person name="Selengut J."/>
            <person name="Dodson R."/>
            <person name="Brinkac L.M."/>
            <person name="Daugherty S.C."/>
            <person name="DeBoy R.T."/>
            <person name="Durkin A.S."/>
            <person name="Gwinn Giglio M."/>
            <person name="Madupu R."/>
            <person name="Nelson W.C."/>
            <person name="Rosovitz M.J."/>
            <person name="Sullivan S.A."/>
            <person name="Crabtree J."/>
            <person name="Creasy T."/>
            <person name="Davidsen T.M."/>
            <person name="Haft D.H."/>
            <person name="Zafar N."/>
            <person name="Zhou L."/>
            <person name="Halpin R."/>
            <person name="Holley T."/>
            <person name="Khouri H.M."/>
            <person name="Feldblyum T.V."/>
            <person name="White O."/>
            <person name="Fraser C.M."/>
            <person name="Chatterjee A.K."/>
            <person name="Cartinhour S."/>
            <person name="Schneider D."/>
            <person name="Mansfield J.W."/>
            <person name="Collmer A."/>
            <person name="Buell R."/>
        </authorList>
    </citation>
    <scope>NUCLEOTIDE SEQUENCE [LARGE SCALE GENOMIC DNA]</scope>
    <source>
        <strain>1448A / Race 6</strain>
    </source>
</reference>
<feature type="chain" id="PRO_1000053854" description="Bifunctional protein PyrR">
    <location>
        <begin position="1"/>
        <end position="170"/>
    </location>
</feature>
<feature type="short sequence motif" description="PRPP-binding" evidence="1">
    <location>
        <begin position="90"/>
        <end position="102"/>
    </location>
</feature>
<proteinExistence type="inferred from homology"/>
<evidence type="ECO:0000255" key="1">
    <source>
        <dbReference type="HAMAP-Rule" id="MF_01219"/>
    </source>
</evidence>
<name>PYRR_PSE14</name>
<keyword id="KW-0328">Glycosyltransferase</keyword>
<keyword id="KW-0804">Transcription</keyword>
<keyword id="KW-0805">Transcription regulation</keyword>
<keyword id="KW-0808">Transferase</keyword>
<protein>
    <recommendedName>
        <fullName evidence="1">Bifunctional protein PyrR</fullName>
    </recommendedName>
    <domain>
        <recommendedName>
            <fullName evidence="1">Pyrimidine operon regulatory protein</fullName>
        </recommendedName>
    </domain>
    <domain>
        <recommendedName>
            <fullName evidence="1">Uracil phosphoribosyltransferase</fullName>
            <shortName evidence="1">UPRTase</shortName>
            <ecNumber evidence="1">2.4.2.9</ecNumber>
        </recommendedName>
    </domain>
</protein>
<sequence length="170" mass="18428">MSLPDPAELIRQMATDLNAHLSKRGISDPRFIGIRTGGVWVAQALLKALNNPAPLGTLDVSFYRDDFSQNGLHPQVRPSDLPFEIEGQHLVLIDDVLMSGRTVRAALNELFDYGRPASVTLVCLLDLDAGELPIRPNVVGATLSLAPDERIKLSGPEPLALELQDLSTAL</sequence>